<reference key="1">
    <citation type="journal article" date="2001" name="Science">
        <title>Complete genome sequence of a virulent isolate of Streptococcus pneumoniae.</title>
        <authorList>
            <person name="Tettelin H."/>
            <person name="Nelson K.E."/>
            <person name="Paulsen I.T."/>
            <person name="Eisen J.A."/>
            <person name="Read T.D."/>
            <person name="Peterson S.N."/>
            <person name="Heidelberg J.F."/>
            <person name="DeBoy R.T."/>
            <person name="Haft D.H."/>
            <person name="Dodson R.J."/>
            <person name="Durkin A.S."/>
            <person name="Gwinn M.L."/>
            <person name="Kolonay J.F."/>
            <person name="Nelson W.C."/>
            <person name="Peterson J.D."/>
            <person name="Umayam L.A."/>
            <person name="White O."/>
            <person name="Salzberg S.L."/>
            <person name="Lewis M.R."/>
            <person name="Radune D."/>
            <person name="Holtzapple E.K."/>
            <person name="Khouri H.M."/>
            <person name="Wolf A.M."/>
            <person name="Utterback T.R."/>
            <person name="Hansen C.L."/>
            <person name="McDonald L.A."/>
            <person name="Feldblyum T.V."/>
            <person name="Angiuoli S.V."/>
            <person name="Dickinson T."/>
            <person name="Hickey E.K."/>
            <person name="Holt I.E."/>
            <person name="Loftus B.J."/>
            <person name="Yang F."/>
            <person name="Smith H.O."/>
            <person name="Venter J.C."/>
            <person name="Dougherty B.A."/>
            <person name="Morrison D.A."/>
            <person name="Hollingshead S.K."/>
            <person name="Fraser C.M."/>
        </authorList>
    </citation>
    <scope>NUCLEOTIDE SEQUENCE [LARGE SCALE GENOMIC DNA]</scope>
    <source>
        <strain>ATCC BAA-334 / TIGR4</strain>
    </source>
</reference>
<reference key="2">
    <citation type="submission" date="2006-09" db="PDB data bank">
        <title>Crystal structure of the phosphate transport system regulatory protein phoU from Streptococcus pneumoniae.</title>
        <authorList>
            <consortium name="Midwest center for structural genomics (MCSG)"/>
        </authorList>
    </citation>
    <scope>X-RAY CRYSTALLOGRAPHY (2.4 ANGSTROMS) IN COMPLEX WITH ZINC IONS</scope>
</reference>
<accession>P0A3Y7</accession>
<accession>Q9X4T4</accession>
<evidence type="ECO:0000250" key="1"/>
<evidence type="ECO:0000305" key="2"/>
<evidence type="ECO:0007829" key="3">
    <source>
        <dbReference type="PDB" id="2I0M"/>
    </source>
</evidence>
<dbReference type="EMBL" id="AE005672">
    <property type="protein sequence ID" value="AAK76148.1"/>
    <property type="molecule type" value="Genomic_DNA"/>
</dbReference>
<dbReference type="PIR" id="C95244">
    <property type="entry name" value="C95244"/>
</dbReference>
<dbReference type="RefSeq" id="WP_001245781.1">
    <property type="nucleotide sequence ID" value="NZ_CP155539.1"/>
</dbReference>
<dbReference type="PDB" id="2I0M">
    <property type="method" value="X-ray"/>
    <property type="resolution" value="2.40 A"/>
    <property type="chains" value="A=1-216"/>
</dbReference>
<dbReference type="PDBsum" id="2I0M"/>
<dbReference type="SMR" id="P0A3Y7"/>
<dbReference type="PaxDb" id="170187-SP_2088"/>
<dbReference type="EnsemblBacteria" id="AAK76148">
    <property type="protein sequence ID" value="AAK76148"/>
    <property type="gene ID" value="SP_2088"/>
</dbReference>
<dbReference type="GeneID" id="45652678"/>
<dbReference type="KEGG" id="spn:SP_2088"/>
<dbReference type="eggNOG" id="COG0704">
    <property type="taxonomic scope" value="Bacteria"/>
</dbReference>
<dbReference type="PhylomeDB" id="P0A3Y7"/>
<dbReference type="BioCyc" id="SPNE170187:G1FZB-2173-MONOMER"/>
<dbReference type="EvolutionaryTrace" id="P0A3Y7"/>
<dbReference type="Proteomes" id="UP000000585">
    <property type="component" value="Chromosome"/>
</dbReference>
<dbReference type="GO" id="GO:0005737">
    <property type="term" value="C:cytoplasm"/>
    <property type="evidence" value="ECO:0000250"/>
    <property type="project" value="UniProtKB"/>
</dbReference>
<dbReference type="GO" id="GO:0042803">
    <property type="term" value="F:protein homodimerization activity"/>
    <property type="evidence" value="ECO:0000250"/>
    <property type="project" value="UniProtKB"/>
</dbReference>
<dbReference type="GO" id="GO:0030643">
    <property type="term" value="P:intracellular phosphate ion homeostasis"/>
    <property type="evidence" value="ECO:0007669"/>
    <property type="project" value="InterPro"/>
</dbReference>
<dbReference type="GO" id="GO:0045936">
    <property type="term" value="P:negative regulation of phosphate metabolic process"/>
    <property type="evidence" value="ECO:0000250"/>
    <property type="project" value="UniProtKB"/>
</dbReference>
<dbReference type="GO" id="GO:2000186">
    <property type="term" value="P:negative regulation of phosphate transmembrane transport"/>
    <property type="evidence" value="ECO:0000250"/>
    <property type="project" value="UniProtKB"/>
</dbReference>
<dbReference type="GO" id="GO:0006817">
    <property type="term" value="P:phosphate ion transport"/>
    <property type="evidence" value="ECO:0007669"/>
    <property type="project" value="UniProtKB-KW"/>
</dbReference>
<dbReference type="FunFam" id="1.20.58.220:FF:000004">
    <property type="entry name" value="Phosphate-specific transport system accessory protein PhoU"/>
    <property type="match status" value="1"/>
</dbReference>
<dbReference type="Gene3D" id="1.20.58.220">
    <property type="entry name" value="Phosphate transport system protein phou homolog 2, domain 2"/>
    <property type="match status" value="1"/>
</dbReference>
<dbReference type="InterPro" id="IPR028366">
    <property type="entry name" value="P_transport_PhoU"/>
</dbReference>
<dbReference type="InterPro" id="IPR038078">
    <property type="entry name" value="PhoU-like_sf"/>
</dbReference>
<dbReference type="InterPro" id="IPR026022">
    <property type="entry name" value="PhoU_dom"/>
</dbReference>
<dbReference type="NCBIfam" id="TIGR02135">
    <property type="entry name" value="phoU_full"/>
    <property type="match status" value="1"/>
</dbReference>
<dbReference type="PANTHER" id="PTHR42930">
    <property type="entry name" value="PHOSPHATE-SPECIFIC TRANSPORT SYSTEM ACCESSORY PROTEIN PHOU"/>
    <property type="match status" value="1"/>
</dbReference>
<dbReference type="PANTHER" id="PTHR42930:SF3">
    <property type="entry name" value="PHOSPHATE-SPECIFIC TRANSPORT SYSTEM ACCESSORY PROTEIN PHOU"/>
    <property type="match status" value="1"/>
</dbReference>
<dbReference type="Pfam" id="PF01895">
    <property type="entry name" value="PhoU"/>
    <property type="match status" value="2"/>
</dbReference>
<dbReference type="PIRSF" id="PIRSF003107">
    <property type="entry name" value="PhoU"/>
    <property type="match status" value="1"/>
</dbReference>
<dbReference type="SUPFAM" id="SSF109755">
    <property type="entry name" value="PhoU-like"/>
    <property type="match status" value="1"/>
</dbReference>
<sequence length="216" mass="24192">MRNQFDLELHELEQSFLGLGQLVLETASKALLALASKDKEMAELIINKDHAINQGQSAIELTCARLLALQQPQVSDLRFVISIMSSCSDLERMGDHMAGIAKAVLQLKENQLAPDEEQLHQMGKLSLSMLADLLVAFPLHQASKAISIAQKDEQIDQYYYALSKEIIGLMKDQETSIPNGTQYLYIIGHLERFADYIANICERLVYLETGELVDLN</sequence>
<gene>
    <name type="primary">phoU</name>
    <name type="ordered locus">SP_2088</name>
</gene>
<comment type="function">
    <text evidence="1">Plays a role in the regulation of phosphate uptake.</text>
</comment>
<comment type="subunit">
    <text evidence="1">Homodimer.</text>
</comment>
<comment type="subcellular location">
    <subcellularLocation>
        <location evidence="1">Cytoplasm</location>
    </subcellularLocation>
</comment>
<comment type="similarity">
    <text evidence="2">Belongs to the PhoU family.</text>
</comment>
<keyword id="KW-0002">3D-structure</keyword>
<keyword id="KW-0963">Cytoplasm</keyword>
<keyword id="KW-0592">Phosphate transport</keyword>
<keyword id="KW-1185">Reference proteome</keyword>
<keyword id="KW-0813">Transport</keyword>
<feature type="chain" id="PRO_0000155179" description="Phosphate-specific transport system accessory protein PhoU homolog">
    <location>
        <begin position="1"/>
        <end position="216"/>
    </location>
</feature>
<feature type="helix" evidence="3">
    <location>
        <begin position="5"/>
        <end position="35"/>
    </location>
</feature>
<feature type="helix" evidence="3">
    <location>
        <begin position="39"/>
        <end position="66"/>
    </location>
</feature>
<feature type="helix" evidence="3">
    <location>
        <begin position="74"/>
        <end position="105"/>
    </location>
</feature>
<feature type="helix" evidence="3">
    <location>
        <begin position="117"/>
        <end position="136"/>
    </location>
</feature>
<feature type="helix" evidence="3">
    <location>
        <begin position="137"/>
        <end position="139"/>
    </location>
</feature>
<feature type="helix" evidence="3">
    <location>
        <begin position="142"/>
        <end position="150"/>
    </location>
</feature>
<feature type="helix" evidence="3">
    <location>
        <begin position="152"/>
        <end position="168"/>
    </location>
</feature>
<feature type="turn" evidence="3">
    <location>
        <begin position="169"/>
        <end position="171"/>
    </location>
</feature>
<feature type="helix" evidence="3">
    <location>
        <begin position="177"/>
        <end position="209"/>
    </location>
</feature>
<name>PHOU_STRPN</name>
<protein>
    <recommendedName>
        <fullName>Phosphate-specific transport system accessory protein PhoU homolog</fullName>
        <shortName>Pst system accessory protein PhoU homolog</shortName>
    </recommendedName>
</protein>
<proteinExistence type="evidence at protein level"/>
<organism>
    <name type="scientific">Streptococcus pneumoniae serotype 4 (strain ATCC BAA-334 / TIGR4)</name>
    <dbReference type="NCBI Taxonomy" id="170187"/>
    <lineage>
        <taxon>Bacteria</taxon>
        <taxon>Bacillati</taxon>
        <taxon>Bacillota</taxon>
        <taxon>Bacilli</taxon>
        <taxon>Lactobacillales</taxon>
        <taxon>Streptococcaceae</taxon>
        <taxon>Streptococcus</taxon>
    </lineage>
</organism>